<accession>A3P9L2</accession>
<reference key="1">
    <citation type="journal article" date="2010" name="Genome Biol. Evol.">
        <title>Continuing evolution of Burkholderia mallei through genome reduction and large-scale rearrangements.</title>
        <authorList>
            <person name="Losada L."/>
            <person name="Ronning C.M."/>
            <person name="DeShazer D."/>
            <person name="Woods D."/>
            <person name="Fedorova N."/>
            <person name="Kim H.S."/>
            <person name="Shabalina S.A."/>
            <person name="Pearson T.R."/>
            <person name="Brinkac L."/>
            <person name="Tan P."/>
            <person name="Nandi T."/>
            <person name="Crabtree J."/>
            <person name="Badger J."/>
            <person name="Beckstrom-Sternberg S."/>
            <person name="Saqib M."/>
            <person name="Schutzer S.E."/>
            <person name="Keim P."/>
            <person name="Nierman W.C."/>
        </authorList>
    </citation>
    <scope>NUCLEOTIDE SEQUENCE [LARGE SCALE GENOMIC DNA]</scope>
    <source>
        <strain>1106a</strain>
    </source>
</reference>
<evidence type="ECO:0000255" key="1">
    <source>
        <dbReference type="HAMAP-Rule" id="MF_01361"/>
    </source>
</evidence>
<protein>
    <recommendedName>
        <fullName evidence="1">UPF0391 membrane protein BURPS1106A_A2993</fullName>
    </recommendedName>
</protein>
<proteinExistence type="inferred from homology"/>
<dbReference type="EMBL" id="CP000573">
    <property type="protein sequence ID" value="ABN93173.1"/>
    <property type="molecule type" value="Genomic_DNA"/>
</dbReference>
<dbReference type="RefSeq" id="WP_004523342.1">
    <property type="nucleotide sequence ID" value="NC_009078.1"/>
</dbReference>
<dbReference type="KEGG" id="bpl:BURPS1106A_A2993"/>
<dbReference type="HOGENOM" id="CLU_187346_0_1_4"/>
<dbReference type="Proteomes" id="UP000006738">
    <property type="component" value="Chromosome II"/>
</dbReference>
<dbReference type="GO" id="GO:0005886">
    <property type="term" value="C:plasma membrane"/>
    <property type="evidence" value="ECO:0007669"/>
    <property type="project" value="UniProtKB-SubCell"/>
</dbReference>
<dbReference type="HAMAP" id="MF_01361">
    <property type="entry name" value="UPF0391"/>
    <property type="match status" value="1"/>
</dbReference>
<dbReference type="InterPro" id="IPR009760">
    <property type="entry name" value="DUF1328"/>
</dbReference>
<dbReference type="NCBIfam" id="NF010226">
    <property type="entry name" value="PRK13682.1-1"/>
    <property type="match status" value="1"/>
</dbReference>
<dbReference type="NCBIfam" id="NF010229">
    <property type="entry name" value="PRK13682.1-4"/>
    <property type="match status" value="1"/>
</dbReference>
<dbReference type="Pfam" id="PF07043">
    <property type="entry name" value="DUF1328"/>
    <property type="match status" value="1"/>
</dbReference>
<dbReference type="PIRSF" id="PIRSF036466">
    <property type="entry name" value="UCP036466"/>
    <property type="match status" value="1"/>
</dbReference>
<keyword id="KW-1003">Cell membrane</keyword>
<keyword id="KW-0472">Membrane</keyword>
<keyword id="KW-0812">Transmembrane</keyword>
<keyword id="KW-1133">Transmembrane helix</keyword>
<name>Y7093_BURP0</name>
<feature type="chain" id="PRO_0000298594" description="UPF0391 membrane protein BURPS1106A_A2993">
    <location>
        <begin position="1"/>
        <end position="53"/>
    </location>
</feature>
<feature type="transmembrane region" description="Helical" evidence="1">
    <location>
        <begin position="5"/>
        <end position="25"/>
    </location>
</feature>
<feature type="transmembrane region" description="Helical" evidence="1">
    <location>
        <begin position="30"/>
        <end position="50"/>
    </location>
</feature>
<organism>
    <name type="scientific">Burkholderia pseudomallei (strain 1106a)</name>
    <dbReference type="NCBI Taxonomy" id="357348"/>
    <lineage>
        <taxon>Bacteria</taxon>
        <taxon>Pseudomonadati</taxon>
        <taxon>Pseudomonadota</taxon>
        <taxon>Betaproteobacteria</taxon>
        <taxon>Burkholderiales</taxon>
        <taxon>Burkholderiaceae</taxon>
        <taxon>Burkholderia</taxon>
        <taxon>pseudomallei group</taxon>
    </lineage>
</organism>
<gene>
    <name type="ordered locus">BURPS1106A_A2993</name>
</gene>
<comment type="subcellular location">
    <subcellularLocation>
        <location evidence="1">Cell membrane</location>
        <topology evidence="1">Multi-pass membrane protein</topology>
    </subcellularLocation>
</comment>
<comment type="similarity">
    <text evidence="1">Belongs to the UPF0391 family.</text>
</comment>
<sequence length="53" mass="5700">MLRYALIFFIIAIIAAVLGFGGIAAGAAEIAKILFYIFVVIFLVTLVLGVARR</sequence>